<protein>
    <recommendedName>
        <fullName evidence="1">Xanthine-guanine phosphoribosyltransferase</fullName>
        <shortName evidence="1">XGPRT</shortName>
        <ecNumber evidence="1">2.4.2.-</ecNumber>
        <ecNumber evidence="1">2.4.2.22</ecNumber>
    </recommendedName>
    <alternativeName>
        <fullName evidence="1">Xanthine phosphoribosyltransferase</fullName>
    </alternativeName>
</protein>
<dbReference type="EC" id="2.4.2.-" evidence="1"/>
<dbReference type="EC" id="2.4.2.22" evidence="1"/>
<dbReference type="EMBL" id="CP000627">
    <property type="protein sequence ID" value="ABQ21739.1"/>
    <property type="molecule type" value="Genomic_DNA"/>
</dbReference>
<dbReference type="EMBL" id="CP001235">
    <property type="protein sequence ID" value="ACP10383.1"/>
    <property type="molecule type" value="Genomic_DNA"/>
</dbReference>
<dbReference type="RefSeq" id="WP_000037415.1">
    <property type="nucleotide sequence ID" value="NZ_JAACZH010000008.1"/>
</dbReference>
<dbReference type="SMR" id="A5F5Y8"/>
<dbReference type="GeneID" id="94013056"/>
<dbReference type="KEGG" id="vco:VC0395_A1867"/>
<dbReference type="KEGG" id="vcr:VC395_2393"/>
<dbReference type="PATRIC" id="fig|345073.21.peg.2307"/>
<dbReference type="eggNOG" id="COG2236">
    <property type="taxonomic scope" value="Bacteria"/>
</dbReference>
<dbReference type="HOGENOM" id="CLU_080904_3_0_6"/>
<dbReference type="OrthoDB" id="9789690at2"/>
<dbReference type="UniPathway" id="UPA00602">
    <property type="reaction ID" value="UER00658"/>
</dbReference>
<dbReference type="UniPathway" id="UPA00909">
    <property type="reaction ID" value="UER00887"/>
</dbReference>
<dbReference type="Proteomes" id="UP000000249">
    <property type="component" value="Chromosome 2"/>
</dbReference>
<dbReference type="GO" id="GO:0005829">
    <property type="term" value="C:cytosol"/>
    <property type="evidence" value="ECO:0007669"/>
    <property type="project" value="TreeGrafter"/>
</dbReference>
<dbReference type="GO" id="GO:0005886">
    <property type="term" value="C:plasma membrane"/>
    <property type="evidence" value="ECO:0007669"/>
    <property type="project" value="UniProtKB-SubCell"/>
</dbReference>
<dbReference type="GO" id="GO:0052657">
    <property type="term" value="F:guanine phosphoribosyltransferase activity"/>
    <property type="evidence" value="ECO:0007669"/>
    <property type="project" value="RHEA"/>
</dbReference>
<dbReference type="GO" id="GO:0004422">
    <property type="term" value="F:hypoxanthine phosphoribosyltransferase activity"/>
    <property type="evidence" value="ECO:0007669"/>
    <property type="project" value="RHEA"/>
</dbReference>
<dbReference type="GO" id="GO:0000287">
    <property type="term" value="F:magnesium ion binding"/>
    <property type="evidence" value="ECO:0007669"/>
    <property type="project" value="UniProtKB-UniRule"/>
</dbReference>
<dbReference type="GO" id="GO:0000310">
    <property type="term" value="F:xanthine phosphoribosyltransferase activity"/>
    <property type="evidence" value="ECO:0007669"/>
    <property type="project" value="UniProtKB-UniRule"/>
</dbReference>
<dbReference type="GO" id="GO:0032263">
    <property type="term" value="P:GMP salvage"/>
    <property type="evidence" value="ECO:0007669"/>
    <property type="project" value="UniProtKB-UniRule"/>
</dbReference>
<dbReference type="GO" id="GO:0032264">
    <property type="term" value="P:IMP salvage"/>
    <property type="evidence" value="ECO:0007669"/>
    <property type="project" value="TreeGrafter"/>
</dbReference>
<dbReference type="GO" id="GO:0006166">
    <property type="term" value="P:purine ribonucleoside salvage"/>
    <property type="evidence" value="ECO:0007669"/>
    <property type="project" value="UniProtKB-KW"/>
</dbReference>
<dbReference type="GO" id="GO:0032265">
    <property type="term" value="P:XMP salvage"/>
    <property type="evidence" value="ECO:0007669"/>
    <property type="project" value="UniProtKB-UniRule"/>
</dbReference>
<dbReference type="CDD" id="cd06223">
    <property type="entry name" value="PRTases_typeI"/>
    <property type="match status" value="1"/>
</dbReference>
<dbReference type="FunFam" id="3.40.50.2020:FF:000009">
    <property type="entry name" value="Xanthine phosphoribosyltransferase"/>
    <property type="match status" value="1"/>
</dbReference>
<dbReference type="Gene3D" id="3.40.50.2020">
    <property type="match status" value="1"/>
</dbReference>
<dbReference type="HAMAP" id="MF_01903">
    <property type="entry name" value="XGPRT"/>
    <property type="match status" value="1"/>
</dbReference>
<dbReference type="InterPro" id="IPR000836">
    <property type="entry name" value="PRibTrfase_dom"/>
</dbReference>
<dbReference type="InterPro" id="IPR029057">
    <property type="entry name" value="PRTase-like"/>
</dbReference>
<dbReference type="InterPro" id="IPR023747">
    <property type="entry name" value="Xanthine_Guanine_PRibTrfase"/>
</dbReference>
<dbReference type="NCBIfam" id="NF006613">
    <property type="entry name" value="PRK09177.1"/>
    <property type="match status" value="1"/>
</dbReference>
<dbReference type="PANTHER" id="PTHR39563">
    <property type="entry name" value="XANTHINE PHOSPHORIBOSYLTRANSFERASE"/>
    <property type="match status" value="1"/>
</dbReference>
<dbReference type="PANTHER" id="PTHR39563:SF1">
    <property type="entry name" value="XANTHINE-GUANINE PHOSPHORIBOSYLTRANSFERASE"/>
    <property type="match status" value="1"/>
</dbReference>
<dbReference type="Pfam" id="PF00156">
    <property type="entry name" value="Pribosyltran"/>
    <property type="match status" value="1"/>
</dbReference>
<dbReference type="SUPFAM" id="SSF53271">
    <property type="entry name" value="PRTase-like"/>
    <property type="match status" value="1"/>
</dbReference>
<dbReference type="PROSITE" id="PS00103">
    <property type="entry name" value="PUR_PYR_PR_TRANSFER"/>
    <property type="match status" value="1"/>
</dbReference>
<name>XGPT_VIBC3</name>
<organism>
    <name type="scientific">Vibrio cholerae serotype O1 (strain ATCC 39541 / Classical Ogawa 395 / O395)</name>
    <dbReference type="NCBI Taxonomy" id="345073"/>
    <lineage>
        <taxon>Bacteria</taxon>
        <taxon>Pseudomonadati</taxon>
        <taxon>Pseudomonadota</taxon>
        <taxon>Gammaproteobacteria</taxon>
        <taxon>Vibrionales</taxon>
        <taxon>Vibrionaceae</taxon>
        <taxon>Vibrio</taxon>
    </lineage>
</organism>
<keyword id="KW-0997">Cell inner membrane</keyword>
<keyword id="KW-1003">Cell membrane</keyword>
<keyword id="KW-0328">Glycosyltransferase</keyword>
<keyword id="KW-0460">Magnesium</keyword>
<keyword id="KW-0472">Membrane</keyword>
<keyword id="KW-0479">Metal-binding</keyword>
<keyword id="KW-0660">Purine salvage</keyword>
<keyword id="KW-0808">Transferase</keyword>
<gene>
    <name evidence="1" type="primary">gpt</name>
    <name type="ordered locus">VC0395_A1867</name>
    <name type="ordered locus">VC395_2393</name>
</gene>
<reference key="1">
    <citation type="submission" date="2007-03" db="EMBL/GenBank/DDBJ databases">
        <authorList>
            <person name="Heidelberg J."/>
        </authorList>
    </citation>
    <scope>NUCLEOTIDE SEQUENCE [LARGE SCALE GENOMIC DNA]</scope>
    <source>
        <strain>ATCC 39541 / Classical Ogawa 395 / O395</strain>
    </source>
</reference>
<reference key="2">
    <citation type="journal article" date="2008" name="PLoS ONE">
        <title>A recalibrated molecular clock and independent origins for the cholera pandemic clones.</title>
        <authorList>
            <person name="Feng L."/>
            <person name="Reeves P.R."/>
            <person name="Lan R."/>
            <person name="Ren Y."/>
            <person name="Gao C."/>
            <person name="Zhou Z."/>
            <person name="Ren Y."/>
            <person name="Cheng J."/>
            <person name="Wang W."/>
            <person name="Wang J."/>
            <person name="Qian W."/>
            <person name="Li D."/>
            <person name="Wang L."/>
        </authorList>
    </citation>
    <scope>NUCLEOTIDE SEQUENCE [LARGE SCALE GENOMIC DNA]</scope>
    <source>
        <strain>ATCC 39541 / Classical Ogawa 395 / O395</strain>
    </source>
</reference>
<evidence type="ECO:0000255" key="1">
    <source>
        <dbReference type="HAMAP-Rule" id="MF_01903"/>
    </source>
</evidence>
<sequence>MSKKFVITWDNMQHYCRELAQRQMPAEQWKGILGVSRGGLVPAAILARELGIRYVDTVCISSYDHDHQRDMTVLKAPEHDGEGFLIIDDLVDSGDTARKIREMYPKAKFVTVCAKPAGKDLVDEYVVDIPQDTWIEQPWDMVLSYVEPVNRKQK</sequence>
<feature type="chain" id="PRO_1000073694" description="Xanthine-guanine phosphoribosyltransferase">
    <location>
        <begin position="1"/>
        <end position="154"/>
    </location>
</feature>
<feature type="binding site" evidence="1">
    <location>
        <begin position="37"/>
        <end position="38"/>
    </location>
    <ligand>
        <name>5-phospho-alpha-D-ribose 1-diphosphate</name>
        <dbReference type="ChEBI" id="CHEBI:58017"/>
    </ligand>
</feature>
<feature type="binding site" evidence="1">
    <location>
        <position position="69"/>
    </location>
    <ligand>
        <name>5-phospho-alpha-D-ribose 1-diphosphate</name>
        <dbReference type="ChEBI" id="CHEBI:58017"/>
    </ligand>
</feature>
<feature type="binding site" evidence="1">
    <location>
        <position position="69"/>
    </location>
    <ligand>
        <name>GMP</name>
        <dbReference type="ChEBI" id="CHEBI:58115"/>
    </ligand>
</feature>
<feature type="binding site" evidence="1">
    <location>
        <begin position="88"/>
        <end position="96"/>
    </location>
    <ligand>
        <name>5-phospho-alpha-D-ribose 1-diphosphate</name>
        <dbReference type="ChEBI" id="CHEBI:58017"/>
    </ligand>
</feature>
<feature type="binding site" evidence="1">
    <location>
        <position position="89"/>
    </location>
    <ligand>
        <name>Mg(2+)</name>
        <dbReference type="ChEBI" id="CHEBI:18420"/>
    </ligand>
</feature>
<feature type="binding site" evidence="1">
    <location>
        <begin position="92"/>
        <end position="96"/>
    </location>
    <ligand>
        <name>GMP</name>
        <dbReference type="ChEBI" id="CHEBI:58115"/>
    </ligand>
</feature>
<feature type="binding site" evidence="1">
    <location>
        <position position="92"/>
    </location>
    <ligand>
        <name>guanine</name>
        <dbReference type="ChEBI" id="CHEBI:16235"/>
    </ligand>
</feature>
<feature type="binding site" evidence="1">
    <location>
        <position position="92"/>
    </location>
    <ligand>
        <name>xanthine</name>
        <dbReference type="ChEBI" id="CHEBI:17712"/>
    </ligand>
</feature>
<feature type="binding site" evidence="1">
    <location>
        <begin position="134"/>
        <end position="135"/>
    </location>
    <ligand>
        <name>GMP</name>
        <dbReference type="ChEBI" id="CHEBI:58115"/>
    </ligand>
</feature>
<feature type="binding site" evidence="1">
    <location>
        <position position="135"/>
    </location>
    <ligand>
        <name>guanine</name>
        <dbReference type="ChEBI" id="CHEBI:16235"/>
    </ligand>
</feature>
<feature type="binding site" evidence="1">
    <location>
        <position position="135"/>
    </location>
    <ligand>
        <name>xanthine</name>
        <dbReference type="ChEBI" id="CHEBI:17712"/>
    </ligand>
</feature>
<accession>A5F5Y8</accession>
<accession>C3M3N4</accession>
<proteinExistence type="inferred from homology"/>
<comment type="function">
    <text evidence="1">Purine salvage pathway enzyme that catalyzes the transfer of the ribosyl-5-phosphate group from 5-phospho-alpha-D-ribose 1-diphosphate (PRPP) to the N9 position of the 6-oxopurines guanine and xanthine to form the corresponding ribonucleotides GMP (guanosine 5'-monophosphate) and XMP (xanthosine 5'-monophosphate), with the release of PPi. To a lesser extent, also acts on hypoxanthine.</text>
</comment>
<comment type="catalytic activity">
    <reaction evidence="1">
        <text>GMP + diphosphate = guanine + 5-phospho-alpha-D-ribose 1-diphosphate</text>
        <dbReference type="Rhea" id="RHEA:25424"/>
        <dbReference type="ChEBI" id="CHEBI:16235"/>
        <dbReference type="ChEBI" id="CHEBI:33019"/>
        <dbReference type="ChEBI" id="CHEBI:58017"/>
        <dbReference type="ChEBI" id="CHEBI:58115"/>
    </reaction>
    <physiologicalReaction direction="right-to-left" evidence="1">
        <dbReference type="Rhea" id="RHEA:25426"/>
    </physiologicalReaction>
</comment>
<comment type="catalytic activity">
    <reaction evidence="1">
        <text>XMP + diphosphate = xanthine + 5-phospho-alpha-D-ribose 1-diphosphate</text>
        <dbReference type="Rhea" id="RHEA:10800"/>
        <dbReference type="ChEBI" id="CHEBI:17712"/>
        <dbReference type="ChEBI" id="CHEBI:33019"/>
        <dbReference type="ChEBI" id="CHEBI:57464"/>
        <dbReference type="ChEBI" id="CHEBI:58017"/>
        <dbReference type="EC" id="2.4.2.22"/>
    </reaction>
    <physiologicalReaction direction="right-to-left" evidence="1">
        <dbReference type="Rhea" id="RHEA:10802"/>
    </physiologicalReaction>
</comment>
<comment type="catalytic activity">
    <reaction evidence="1">
        <text>IMP + diphosphate = hypoxanthine + 5-phospho-alpha-D-ribose 1-diphosphate</text>
        <dbReference type="Rhea" id="RHEA:17973"/>
        <dbReference type="ChEBI" id="CHEBI:17368"/>
        <dbReference type="ChEBI" id="CHEBI:33019"/>
        <dbReference type="ChEBI" id="CHEBI:58017"/>
        <dbReference type="ChEBI" id="CHEBI:58053"/>
    </reaction>
    <physiologicalReaction direction="right-to-left" evidence="1">
        <dbReference type="Rhea" id="RHEA:17975"/>
    </physiologicalReaction>
</comment>
<comment type="cofactor">
    <cofactor evidence="1">
        <name>Mg(2+)</name>
        <dbReference type="ChEBI" id="CHEBI:18420"/>
    </cofactor>
</comment>
<comment type="pathway">
    <text evidence="1">Purine metabolism; GMP biosynthesis via salvage pathway; GMP from guanine: step 1/1.</text>
</comment>
<comment type="pathway">
    <text evidence="1">Purine metabolism; XMP biosynthesis via salvage pathway; XMP from xanthine: step 1/1.</text>
</comment>
<comment type="subunit">
    <text evidence="1">Homotetramer.</text>
</comment>
<comment type="subcellular location">
    <subcellularLocation>
        <location evidence="1">Cell inner membrane</location>
        <topology evidence="1">Peripheral membrane protein</topology>
    </subcellularLocation>
</comment>
<comment type="similarity">
    <text evidence="1">Belongs to the purine/pyrimidine phosphoribosyltransferase family. XGPT subfamily.</text>
</comment>